<gene>
    <name type="primary">sbcC</name>
    <name type="ordered locus">SaurJH9_1408</name>
</gene>
<accession>A5ISM9</accession>
<evidence type="ECO:0000250" key="1"/>
<evidence type="ECO:0000255" key="2"/>
<evidence type="ECO:0000305" key="3"/>
<organism>
    <name type="scientific">Staphylococcus aureus (strain JH9)</name>
    <dbReference type="NCBI Taxonomy" id="359786"/>
    <lineage>
        <taxon>Bacteria</taxon>
        <taxon>Bacillati</taxon>
        <taxon>Bacillota</taxon>
        <taxon>Bacilli</taxon>
        <taxon>Bacillales</taxon>
        <taxon>Staphylococcaceae</taxon>
        <taxon>Staphylococcus</taxon>
    </lineage>
</organism>
<protein>
    <recommendedName>
        <fullName>Nuclease SbcCD subunit C</fullName>
    </recommendedName>
</protein>
<sequence length="1009" mass="117482">MKPLHLKLNNFGPFLKEEIDFSKIDNNELFLISGKTGSGKTMIFDAMTYALFGKASTEQREENDLRSHFADGKQPMSVTFEFQLNHRIYKVHRQGPYIKEGNTTKTNAKFDVFEMVDGKYEIRESKVISGTQFIIELLGVNADQFRQLFILPQGEFKRFLISNSREKQGILRTLFDSEKFEAIREILKEELKKEKAQIENRYQQIDLLWQEIESFDDDKIKGLLELATQQIDKLIENIPLLQARSKEILAFVNESKETAIKEYEIIEKKTLENNILKDNINQLNKNKIDFVQLKEQQPEIDEIEAKLKLLQDITNLLNYIENREKIETKIANSKKDISKTNNKILNLDCDKRNIDKEKKMLEENGDLIESKTSFIDKTRVLFNDINKYQQSYLNIECLITEGEQLGDELNNLIKGLEKVEDSIGNNESDYEKIIELNNAITNINNEINIIKENEKAKAELDKLLGSKQELENQINEETTIMKNLEIKLDHYDKSKLDLNDKESFISEIKSAVKIGDQCPICGNEIQDLGHHIDFDSIAKRQNEIKEIEANIHAIKSNIAVHNSEIKFVNEKISNINIKTQSDFSLEVLNKRLLENENALNNQRDLNKFIEQMKEEKDNLTLQIHNKQLRLNKNESELKLCRDLITEFETLSKYNNITNFEVDYKKYVQDVNQHQELSKEIEDKLMQLSQRKLIEQNNLNHYENQLETYNNDLELNEQSIEMEMSRLNLTDDNDINEIIAWRGEQEELEQKRDTYKKRYHEFEMEIARLESLTKDKELLDSDKLKDEYEQKKEKMNTLIDEYSAVHYQCQNNINKTQSIVSHINYLNQELKDQQEIFQLAEIVSGKNNKNLTLENFVLIYYLDQIIAQANLRLATMSDNRYQLIRREAVSHGLSGLEIDVFDLHSNKSRHISSLSGGETFQSSLALALGLSEIVQQQSGGISLESIFIDEGFGTLDQETLETALDTLLNLKSTGRMVGIISHVSELKNRIPLVLEVKSDQYQSSTRFKRN</sequence>
<comment type="function">
    <text evidence="1">SbcCD cleaves DNA hairpin structures. These structures can inhibit DNA replication and are intermediates in certain DNA recombination reactions. The complex acts as a 3'-&gt;5' double strand exonuclease that can open hairpins. It also has a 5' single-strand endonuclease activity (By similarity).</text>
</comment>
<comment type="subunit">
    <text evidence="1">Heterodimer of SbcC and SbcD.</text>
</comment>
<comment type="similarity">
    <text evidence="3">Belongs to the SMC family. SbcC subfamily.</text>
</comment>
<dbReference type="EMBL" id="CP000703">
    <property type="protein sequence ID" value="ABQ49202.1"/>
    <property type="molecule type" value="Genomic_DNA"/>
</dbReference>
<dbReference type="RefSeq" id="WP_000803135.1">
    <property type="nucleotide sequence ID" value="NC_009487.1"/>
</dbReference>
<dbReference type="SMR" id="A5ISM9"/>
<dbReference type="KEGG" id="saj:SaurJH9_1408"/>
<dbReference type="HOGENOM" id="CLU_004785_2_1_9"/>
<dbReference type="GO" id="GO:0005524">
    <property type="term" value="F:ATP binding"/>
    <property type="evidence" value="ECO:0007669"/>
    <property type="project" value="UniProtKB-KW"/>
</dbReference>
<dbReference type="GO" id="GO:0016887">
    <property type="term" value="F:ATP hydrolysis activity"/>
    <property type="evidence" value="ECO:0007669"/>
    <property type="project" value="InterPro"/>
</dbReference>
<dbReference type="GO" id="GO:0004519">
    <property type="term" value="F:endonuclease activity"/>
    <property type="evidence" value="ECO:0007669"/>
    <property type="project" value="UniProtKB-KW"/>
</dbReference>
<dbReference type="GO" id="GO:0004527">
    <property type="term" value="F:exonuclease activity"/>
    <property type="evidence" value="ECO:0007669"/>
    <property type="project" value="UniProtKB-KW"/>
</dbReference>
<dbReference type="GO" id="GO:0006310">
    <property type="term" value="P:DNA recombination"/>
    <property type="evidence" value="ECO:0007669"/>
    <property type="project" value="UniProtKB-KW"/>
</dbReference>
<dbReference type="GO" id="GO:0006260">
    <property type="term" value="P:DNA replication"/>
    <property type="evidence" value="ECO:0007669"/>
    <property type="project" value="UniProtKB-KW"/>
</dbReference>
<dbReference type="GO" id="GO:0006302">
    <property type="term" value="P:double-strand break repair"/>
    <property type="evidence" value="ECO:0007669"/>
    <property type="project" value="InterPro"/>
</dbReference>
<dbReference type="CDD" id="cd03279">
    <property type="entry name" value="ABC_sbcCD"/>
    <property type="match status" value="1"/>
</dbReference>
<dbReference type="Gene3D" id="3.40.50.300">
    <property type="entry name" value="P-loop containing nucleotide triphosphate hydrolases"/>
    <property type="match status" value="2"/>
</dbReference>
<dbReference type="InterPro" id="IPR027417">
    <property type="entry name" value="P-loop_NTPase"/>
</dbReference>
<dbReference type="InterPro" id="IPR038729">
    <property type="entry name" value="Rad50/SbcC_AAA"/>
</dbReference>
<dbReference type="InterPro" id="IPR053380">
    <property type="entry name" value="SbcCD_Nuclease_C"/>
</dbReference>
<dbReference type="NCBIfam" id="NF041751">
    <property type="entry name" value="sbcc_Staph"/>
    <property type="match status" value="1"/>
</dbReference>
<dbReference type="PANTHER" id="PTHR32114">
    <property type="entry name" value="ABC TRANSPORTER ABCH.3"/>
    <property type="match status" value="1"/>
</dbReference>
<dbReference type="PANTHER" id="PTHR32114:SF2">
    <property type="entry name" value="ABC TRANSPORTER ABCH.3"/>
    <property type="match status" value="1"/>
</dbReference>
<dbReference type="Pfam" id="PF13476">
    <property type="entry name" value="AAA_23"/>
    <property type="match status" value="1"/>
</dbReference>
<dbReference type="Pfam" id="PF13558">
    <property type="entry name" value="SbcC_Walker_B"/>
    <property type="match status" value="1"/>
</dbReference>
<dbReference type="SUPFAM" id="SSF52540">
    <property type="entry name" value="P-loop containing nucleoside triphosphate hydrolases"/>
    <property type="match status" value="2"/>
</dbReference>
<dbReference type="SUPFAM" id="SSF75712">
    <property type="entry name" value="Rad50 coiled-coil Zn hook"/>
    <property type="match status" value="1"/>
</dbReference>
<feature type="chain" id="PRO_0000338463" description="Nuclease SbcCD subunit C">
    <location>
        <begin position="1"/>
        <end position="1009"/>
    </location>
</feature>
<feature type="coiled-coil region" evidence="2">
    <location>
        <begin position="176"/>
        <end position="364"/>
    </location>
</feature>
<feature type="coiled-coil region" evidence="2">
    <location>
        <begin position="401"/>
        <end position="501"/>
    </location>
</feature>
<feature type="coiled-coil region" evidence="2">
    <location>
        <begin position="535"/>
        <end position="805"/>
    </location>
</feature>
<feature type="binding site" evidence="2">
    <location>
        <begin position="34"/>
        <end position="41"/>
    </location>
    <ligand>
        <name>ATP</name>
        <dbReference type="ChEBI" id="CHEBI:30616"/>
    </ligand>
</feature>
<reference key="1">
    <citation type="submission" date="2007-05" db="EMBL/GenBank/DDBJ databases">
        <title>Complete sequence of chromosome of Staphylococcus aureus subsp. aureus JH9.</title>
        <authorList>
            <consortium name="US DOE Joint Genome Institute"/>
            <person name="Copeland A."/>
            <person name="Lucas S."/>
            <person name="Lapidus A."/>
            <person name="Barry K."/>
            <person name="Detter J.C."/>
            <person name="Glavina del Rio T."/>
            <person name="Hammon N."/>
            <person name="Israni S."/>
            <person name="Pitluck S."/>
            <person name="Chain P."/>
            <person name="Malfatti S."/>
            <person name="Shin M."/>
            <person name="Vergez L."/>
            <person name="Schmutz J."/>
            <person name="Larimer F."/>
            <person name="Land M."/>
            <person name="Hauser L."/>
            <person name="Kyrpides N."/>
            <person name="Kim E."/>
            <person name="Tomasz A."/>
            <person name="Richardson P."/>
        </authorList>
    </citation>
    <scope>NUCLEOTIDE SEQUENCE [LARGE SCALE GENOMIC DNA]</scope>
    <source>
        <strain>JH9</strain>
    </source>
</reference>
<proteinExistence type="inferred from homology"/>
<name>SBCC_STAA9</name>
<keyword id="KW-0067">ATP-binding</keyword>
<keyword id="KW-0175">Coiled coil</keyword>
<keyword id="KW-0233">DNA recombination</keyword>
<keyword id="KW-0235">DNA replication</keyword>
<keyword id="KW-0255">Endonuclease</keyword>
<keyword id="KW-0269">Exonuclease</keyword>
<keyword id="KW-0378">Hydrolase</keyword>
<keyword id="KW-0540">Nuclease</keyword>
<keyword id="KW-0547">Nucleotide-binding</keyword>